<evidence type="ECO:0000256" key="1">
    <source>
        <dbReference type="SAM" id="MobiDB-lite"/>
    </source>
</evidence>
<evidence type="ECO:0000305" key="2"/>
<protein>
    <recommendedName>
        <fullName evidence="2">Large ribosomal subunit protein eL14</fullName>
    </recommendedName>
    <alternativeName>
        <fullName>60S ribosomal protein L14</fullName>
    </alternativeName>
</protein>
<comment type="similarity">
    <text evidence="2">Belongs to the eukaryotic ribosomal protein eL14 family.</text>
</comment>
<organism>
    <name type="scientific">Drosophila virilis</name>
    <name type="common">Fruit fly</name>
    <dbReference type="NCBI Taxonomy" id="7244"/>
    <lineage>
        <taxon>Eukaryota</taxon>
        <taxon>Metazoa</taxon>
        <taxon>Ecdysozoa</taxon>
        <taxon>Arthropoda</taxon>
        <taxon>Hexapoda</taxon>
        <taxon>Insecta</taxon>
        <taxon>Pterygota</taxon>
        <taxon>Neoptera</taxon>
        <taxon>Endopterygota</taxon>
        <taxon>Diptera</taxon>
        <taxon>Brachycera</taxon>
        <taxon>Muscomorpha</taxon>
        <taxon>Ephydroidea</taxon>
        <taxon>Drosophilidae</taxon>
        <taxon>Drosophila</taxon>
    </lineage>
</organism>
<accession>Q95ZE8</accession>
<accession>B4LEK8</accession>
<feature type="chain" id="PRO_0000132035" description="Large ribosomal subunit protein eL14">
    <location>
        <begin position="1"/>
        <end position="160"/>
    </location>
</feature>
<feature type="region of interest" description="Disordered" evidence="1">
    <location>
        <begin position="136"/>
        <end position="160"/>
    </location>
</feature>
<feature type="compositionally biased region" description="Basic and acidic residues" evidence="1">
    <location>
        <begin position="146"/>
        <end position="160"/>
    </location>
</feature>
<name>RL14_DROVI</name>
<gene>
    <name type="primary">RpL14</name>
    <name type="ORF">GJ13054</name>
</gene>
<dbReference type="EMBL" id="AJ306692">
    <property type="protein sequence ID" value="CAC41629.1"/>
    <property type="molecule type" value="Genomic_DNA"/>
</dbReference>
<dbReference type="EMBL" id="CH940647">
    <property type="protein sequence ID" value="EDW69093.1"/>
    <property type="molecule type" value="Genomic_DNA"/>
</dbReference>
<dbReference type="RefSeq" id="XP_002046751.1">
    <property type="nucleotide sequence ID" value="XM_002046715.4"/>
</dbReference>
<dbReference type="SMR" id="Q95ZE8"/>
<dbReference type="FunCoup" id="Q95ZE8">
    <property type="interactions" value="1177"/>
</dbReference>
<dbReference type="STRING" id="7244.Q95ZE8"/>
<dbReference type="EnsemblMetazoa" id="FBtr0228979">
    <property type="protein sequence ID" value="FBpp0227471"/>
    <property type="gene ID" value="FBgn0044889"/>
</dbReference>
<dbReference type="EnsemblMetazoa" id="XM_002046715.3">
    <property type="protein sequence ID" value="XP_002046751.1"/>
    <property type="gene ID" value="LOC6623342"/>
</dbReference>
<dbReference type="GeneID" id="6623342"/>
<dbReference type="KEGG" id="dvi:6623342"/>
<dbReference type="CTD" id="9045"/>
<dbReference type="eggNOG" id="KOG3421">
    <property type="taxonomic scope" value="Eukaryota"/>
</dbReference>
<dbReference type="HOGENOM" id="CLU_082438_2_0_1"/>
<dbReference type="InParanoid" id="Q95ZE8"/>
<dbReference type="OMA" id="KLCFVVD"/>
<dbReference type="OrthoDB" id="1875589at2759"/>
<dbReference type="PhylomeDB" id="Q95ZE8"/>
<dbReference type="ChiTaRS" id="RpL14">
    <property type="organism name" value="fly"/>
</dbReference>
<dbReference type="Proteomes" id="UP000008792">
    <property type="component" value="Unassembled WGS sequence"/>
</dbReference>
<dbReference type="GO" id="GO:0022625">
    <property type="term" value="C:cytosolic large ribosomal subunit"/>
    <property type="evidence" value="ECO:0007669"/>
    <property type="project" value="TreeGrafter"/>
</dbReference>
<dbReference type="GO" id="GO:0003723">
    <property type="term" value="F:RNA binding"/>
    <property type="evidence" value="ECO:0007669"/>
    <property type="project" value="InterPro"/>
</dbReference>
<dbReference type="GO" id="GO:0003735">
    <property type="term" value="F:structural constituent of ribosome"/>
    <property type="evidence" value="ECO:0007669"/>
    <property type="project" value="EnsemblMetazoa"/>
</dbReference>
<dbReference type="GO" id="GO:0043524">
    <property type="term" value="P:negative regulation of neuron apoptotic process"/>
    <property type="evidence" value="ECO:0007669"/>
    <property type="project" value="EnsemblMetazoa"/>
</dbReference>
<dbReference type="GO" id="GO:0042273">
    <property type="term" value="P:ribosomal large subunit biogenesis"/>
    <property type="evidence" value="ECO:0007669"/>
    <property type="project" value="TreeGrafter"/>
</dbReference>
<dbReference type="GO" id="GO:0006412">
    <property type="term" value="P:translation"/>
    <property type="evidence" value="ECO:0007669"/>
    <property type="project" value="InterPro"/>
</dbReference>
<dbReference type="CDD" id="cd23702">
    <property type="entry name" value="eL14"/>
    <property type="match status" value="1"/>
</dbReference>
<dbReference type="FunFam" id="2.30.30.30:FF:000050">
    <property type="entry name" value="60S ribosomal protein L14"/>
    <property type="match status" value="1"/>
</dbReference>
<dbReference type="Gene3D" id="2.30.30.30">
    <property type="match status" value="1"/>
</dbReference>
<dbReference type="Gene3D" id="6.10.250.2270">
    <property type="match status" value="1"/>
</dbReference>
<dbReference type="InterPro" id="IPR014722">
    <property type="entry name" value="Rib_uL2_dom2"/>
</dbReference>
<dbReference type="InterPro" id="IPR039660">
    <property type="entry name" value="Ribosomal_eL14"/>
</dbReference>
<dbReference type="InterPro" id="IPR002784">
    <property type="entry name" value="Ribosomal_eL14_dom"/>
</dbReference>
<dbReference type="InterPro" id="IPR008991">
    <property type="entry name" value="Translation_prot_SH3-like_sf"/>
</dbReference>
<dbReference type="PANTHER" id="PTHR11127">
    <property type="entry name" value="60S RIBOSOMAL PROTEIN L14"/>
    <property type="match status" value="1"/>
</dbReference>
<dbReference type="PANTHER" id="PTHR11127:SF2">
    <property type="entry name" value="LARGE RIBOSOMAL SUBUNIT PROTEIN EL14"/>
    <property type="match status" value="1"/>
</dbReference>
<dbReference type="Pfam" id="PF01929">
    <property type="entry name" value="Ribosomal_L14e"/>
    <property type="match status" value="1"/>
</dbReference>
<dbReference type="SUPFAM" id="SSF50104">
    <property type="entry name" value="Translation proteins SH3-like domain"/>
    <property type="match status" value="1"/>
</dbReference>
<keyword id="KW-1185">Reference proteome</keyword>
<keyword id="KW-0687">Ribonucleoprotein</keyword>
<keyword id="KW-0689">Ribosomal protein</keyword>
<proteinExistence type="inferred from homology"/>
<sequence length="160" mass="18716">MPFERFVQTGRIAKASAGPLKGRLVAIVDVIDQNRVLVDGPLTGVPRQEYRLNNLHLTKYRIKFPYTAPTRIVRKAWVDSDLKAQWKVSPWSVKAQNICKRSQLNDFDRFKLRYAKRQRNKLLTIAFNTLKKRTKSDGTPRILKKDRRERLRAEKAKAKK</sequence>
<reference key="1">
    <citation type="journal article" date="2002" name="Gene">
        <title>Conservation of gene order, structure and sequence between three closely linked genes in Drosophila melanogaster and Drosophila virilis.</title>
        <authorList>
            <person name="Lyamouri M."/>
            <person name="Enerly E."/>
            <person name="Kress H."/>
            <person name="Lambertsson A."/>
        </authorList>
    </citation>
    <scope>NUCLEOTIDE SEQUENCE [GENOMIC DNA]</scope>
</reference>
<reference key="2">
    <citation type="journal article" date="2007" name="Nature">
        <title>Evolution of genes and genomes on the Drosophila phylogeny.</title>
        <authorList>
            <consortium name="Drosophila 12 genomes consortium"/>
        </authorList>
    </citation>
    <scope>NUCLEOTIDE SEQUENCE [LARGE SCALE GENOMIC DNA]</scope>
    <source>
        <strain>Tucson 15010-1051.87</strain>
    </source>
</reference>